<proteinExistence type="evidence at protein level"/>
<feature type="chain" id="PRO_0000204492" description="Pimeloyl-[acyl-carrier protein] methyl ester esterase">
    <location>
        <begin position="1"/>
        <end position="255"/>
    </location>
</feature>
<feature type="domain" description="AB hydrolase-1" evidence="1">
    <location>
        <begin position="16"/>
        <end position="241"/>
    </location>
</feature>
<feature type="active site" description="Nucleophile" evidence="2">
    <location>
        <position position="81"/>
    </location>
</feature>
<feature type="active site" evidence="2">
    <location>
        <position position="206"/>
    </location>
</feature>
<feature type="active site" evidence="2">
    <location>
        <position position="234"/>
    </location>
</feature>
<feature type="binding site" evidence="2">
    <location>
        <position position="22"/>
    </location>
    <ligand>
        <name>substrate</name>
    </ligand>
</feature>
<feature type="binding site" evidence="2">
    <location>
        <begin position="81"/>
        <end position="82"/>
    </location>
    <ligand>
        <name>substrate</name>
    </ligand>
</feature>
<feature type="binding site" evidence="2">
    <location>
        <begin position="142"/>
        <end position="146"/>
    </location>
    <ligand>
        <name>substrate</name>
    </ligand>
</feature>
<feature type="binding site" evidence="2">
    <location>
        <position position="234"/>
    </location>
    <ligand>
        <name>substrate</name>
    </ligand>
</feature>
<reference key="1">
    <citation type="journal article" date="2003" name="Gene">
        <title>The Serratia marcescens bioH gene encodes an esterase.</title>
        <authorList>
            <person name="Akatsuka H."/>
            <person name="Kawai E."/>
            <person name="Imai Y."/>
            <person name="Sakurai N."/>
            <person name="Omori K."/>
        </authorList>
    </citation>
    <scope>NUCLEOTIDE SEQUENCE [GENOMIC DNA]</scope>
    <scope>FUNCTION AS AN ESTERASE</scope>
    <scope>ROLE IN BIOTIN BIOSYNTHESIS</scope>
    <scope>SUBCELLULAR LOCATION</scope>
    <source>
        <strain>Sr41 / 8000</strain>
    </source>
</reference>
<name>BIOH_SERMA</name>
<sequence length="255" mass="27859">MTALYWQTIGEGERDLVLLHGWGLNAEVWSCIQALTPHFRLHLVDLPGYGRSQGFGALSLAQMTEIVLAAAPPQAWWLGWSLGGLVASQAALMQPQRVSGLITVASSPCFAARDEWPGIRPDVLSGFQHQLSLDFQRTVERFLALQTLGTESARQDARQLKAVVLNQPTPSVEVLNGGLEILRTADLRAPLAELNLPLLRIYGYLDGLVPRKVAELLDAAWPNSTSQIVAKAAHAPFISHPDEFVTMIEAFIAAH</sequence>
<organism>
    <name type="scientific">Serratia marcescens</name>
    <dbReference type="NCBI Taxonomy" id="615"/>
    <lineage>
        <taxon>Bacteria</taxon>
        <taxon>Pseudomonadati</taxon>
        <taxon>Pseudomonadota</taxon>
        <taxon>Gammaproteobacteria</taxon>
        <taxon>Enterobacterales</taxon>
        <taxon>Yersiniaceae</taxon>
        <taxon>Serratia</taxon>
    </lineage>
</organism>
<accession>Q8GHL1</accession>
<evidence type="ECO:0000255" key="1"/>
<evidence type="ECO:0000255" key="2">
    <source>
        <dbReference type="HAMAP-Rule" id="MF_01260"/>
    </source>
</evidence>
<evidence type="ECO:0000269" key="3">
    <source>
    </source>
</evidence>
<comment type="function">
    <text evidence="2 3">The physiological role of BioH is to remove the methyl group introduced by BioC when the pimeloyl moiety is complete. It allows to synthesize pimeloyl-ACP via the fatty acid synthetic pathway through the hydrolysis of the ester bonds of pimeloyl-ACP esters. Also displays a weak thioesterase activity. Can form a complex with CoA, and may be involved in the condensation of CoA and pimelic acid into pimeloyl-CoA, a precursor in biotin biosynthesis.</text>
</comment>
<comment type="catalytic activity">
    <reaction evidence="2">
        <text>6-carboxyhexanoyl-[ACP] methyl ester + H2O = 6-carboxyhexanoyl-[ACP] + methanol + H(+)</text>
        <dbReference type="Rhea" id="RHEA:42700"/>
        <dbReference type="Rhea" id="RHEA-COMP:9955"/>
        <dbReference type="Rhea" id="RHEA-COMP:10186"/>
        <dbReference type="ChEBI" id="CHEBI:15377"/>
        <dbReference type="ChEBI" id="CHEBI:15378"/>
        <dbReference type="ChEBI" id="CHEBI:17790"/>
        <dbReference type="ChEBI" id="CHEBI:78846"/>
        <dbReference type="ChEBI" id="CHEBI:82735"/>
        <dbReference type="EC" id="3.1.1.85"/>
    </reaction>
</comment>
<comment type="pathway">
    <text evidence="2">Cofactor biosynthesis; biotin biosynthesis.</text>
</comment>
<comment type="subunit">
    <text evidence="2">Monomer.</text>
</comment>
<comment type="subcellular location">
    <subcellularLocation>
        <location evidence="2 3">Cytoplasm</location>
    </subcellularLocation>
</comment>
<comment type="similarity">
    <text evidence="2">Belongs to the AB hydrolase superfamily. Carboxylesterase BioH family.</text>
</comment>
<gene>
    <name evidence="2" type="primary">bioH</name>
</gene>
<keyword id="KW-0093">Biotin biosynthesis</keyword>
<keyword id="KW-0963">Cytoplasm</keyword>
<keyword id="KW-0378">Hydrolase</keyword>
<keyword id="KW-0719">Serine esterase</keyword>
<dbReference type="EC" id="3.1.1.85" evidence="2"/>
<dbReference type="EMBL" id="AB089611">
    <property type="protein sequence ID" value="BAC53660.1"/>
    <property type="molecule type" value="Genomic_DNA"/>
</dbReference>
<dbReference type="SMR" id="Q8GHL1"/>
<dbReference type="STRING" id="273526.SMDB11_3876"/>
<dbReference type="ESTHER" id="serma-bioH">
    <property type="family name" value="BioH"/>
</dbReference>
<dbReference type="UniPathway" id="UPA00078"/>
<dbReference type="GO" id="GO:0005737">
    <property type="term" value="C:cytoplasm"/>
    <property type="evidence" value="ECO:0007669"/>
    <property type="project" value="UniProtKB-SubCell"/>
</dbReference>
<dbReference type="GO" id="GO:0052689">
    <property type="term" value="F:carboxylic ester hydrolase activity"/>
    <property type="evidence" value="ECO:0000250"/>
    <property type="project" value="UniProtKB"/>
</dbReference>
<dbReference type="GO" id="GO:0090499">
    <property type="term" value="F:pimelyl-[acyl-carrier protein] methyl ester esterase activity"/>
    <property type="evidence" value="ECO:0007669"/>
    <property type="project" value="UniProtKB-EC"/>
</dbReference>
<dbReference type="GO" id="GO:0009102">
    <property type="term" value="P:biotin biosynthetic process"/>
    <property type="evidence" value="ECO:0000314"/>
    <property type="project" value="UniProtKB"/>
</dbReference>
<dbReference type="FunFam" id="3.40.50.1820:FF:000045">
    <property type="entry name" value="Pimeloyl-[acyl-carrier protein] methyl ester esterase"/>
    <property type="match status" value="1"/>
</dbReference>
<dbReference type="Gene3D" id="3.40.50.1820">
    <property type="entry name" value="alpha/beta hydrolase"/>
    <property type="match status" value="1"/>
</dbReference>
<dbReference type="HAMAP" id="MF_01260">
    <property type="entry name" value="Carboxylester"/>
    <property type="match status" value="1"/>
</dbReference>
<dbReference type="InterPro" id="IPR000073">
    <property type="entry name" value="AB_hydrolase_1"/>
</dbReference>
<dbReference type="InterPro" id="IPR029058">
    <property type="entry name" value="AB_hydrolase_fold"/>
</dbReference>
<dbReference type="InterPro" id="IPR010076">
    <property type="entry name" value="BioH"/>
</dbReference>
<dbReference type="InterPro" id="IPR050228">
    <property type="entry name" value="Carboxylesterase_BioH"/>
</dbReference>
<dbReference type="NCBIfam" id="TIGR01738">
    <property type="entry name" value="bioH"/>
    <property type="match status" value="1"/>
</dbReference>
<dbReference type="PANTHER" id="PTHR43194">
    <property type="entry name" value="HYDROLASE ALPHA/BETA FOLD FAMILY"/>
    <property type="match status" value="1"/>
</dbReference>
<dbReference type="PANTHER" id="PTHR43194:SF5">
    <property type="entry name" value="PIMELOYL-[ACYL-CARRIER PROTEIN] METHYL ESTER ESTERASE"/>
    <property type="match status" value="1"/>
</dbReference>
<dbReference type="Pfam" id="PF00561">
    <property type="entry name" value="Abhydrolase_1"/>
    <property type="match status" value="1"/>
</dbReference>
<dbReference type="SUPFAM" id="SSF53474">
    <property type="entry name" value="alpha/beta-Hydrolases"/>
    <property type="match status" value="1"/>
</dbReference>
<protein>
    <recommendedName>
        <fullName evidence="2">Pimeloyl-[acyl-carrier protein] methyl ester esterase</fullName>
        <ecNumber evidence="2">3.1.1.85</ecNumber>
    </recommendedName>
    <alternativeName>
        <fullName evidence="2">Biotin synthesis protein BioH</fullName>
    </alternativeName>
    <alternativeName>
        <fullName evidence="2">Carboxylesterase BioH</fullName>
    </alternativeName>
</protein>